<evidence type="ECO:0000250" key="1"/>
<evidence type="ECO:0000256" key="2">
    <source>
        <dbReference type="SAM" id="MobiDB-lite"/>
    </source>
</evidence>
<evidence type="ECO:0000305" key="3"/>
<evidence type="ECO:0007829" key="4">
    <source>
        <dbReference type="PDB" id="1DVO"/>
    </source>
</evidence>
<accession>P29367</accession>
<feature type="chain" id="PRO_0000068352" description="Fertility inhibition protein">
    <location>
        <begin position="1"/>
        <end position="186"/>
    </location>
</feature>
<feature type="region of interest" description="Disordered" evidence="2">
    <location>
        <begin position="1"/>
        <end position="22"/>
    </location>
</feature>
<feature type="helix" evidence="4">
    <location>
        <begin position="35"/>
        <end position="64"/>
    </location>
</feature>
<feature type="helix" evidence="4">
    <location>
        <begin position="65"/>
        <end position="68"/>
    </location>
</feature>
<feature type="helix" evidence="4">
    <location>
        <begin position="73"/>
        <end position="80"/>
    </location>
</feature>
<feature type="turn" evidence="4">
    <location>
        <begin position="81"/>
        <end position="83"/>
    </location>
</feature>
<feature type="helix" evidence="4">
    <location>
        <begin position="85"/>
        <end position="87"/>
    </location>
</feature>
<feature type="helix" evidence="4">
    <location>
        <begin position="100"/>
        <end position="110"/>
    </location>
</feature>
<feature type="helix" evidence="4">
    <location>
        <begin position="117"/>
        <end position="128"/>
    </location>
</feature>
<feature type="helix" evidence="4">
    <location>
        <begin position="131"/>
        <end position="136"/>
    </location>
</feature>
<feature type="strand" evidence="4">
    <location>
        <begin position="142"/>
        <end position="144"/>
    </location>
</feature>
<feature type="strand" evidence="4">
    <location>
        <begin position="150"/>
        <end position="153"/>
    </location>
</feature>
<feature type="helix" evidence="4">
    <location>
        <begin position="156"/>
        <end position="183"/>
    </location>
</feature>
<organism>
    <name type="scientific">Escherichia coli</name>
    <dbReference type="NCBI Taxonomy" id="562"/>
    <lineage>
        <taxon>Bacteria</taxon>
        <taxon>Pseudomonadati</taxon>
        <taxon>Pseudomonadota</taxon>
        <taxon>Gammaproteobacteria</taxon>
        <taxon>Enterobacterales</taxon>
        <taxon>Enterobacteriaceae</taxon>
        <taxon>Escherichia</taxon>
    </lineage>
</organism>
<name>FINO3_ECOLX</name>
<sequence length="186" mass="21280">MTEQKRPVLTLKRKTEGETPTRSRKTIINVTTPPKWKVKKQKLAEKAAREAELTAKKAQARQALSIYLNLPTLDEAVNTLKPWWPGLFDGDTPRLLACGIRDVLLEDVAQRNIPLSHKKLRRALKAITRSESYLCAMKAGACRYDTEGYVTEHISQEEEVYAAERLDKIRRQNRIKAELQAVLDEQ</sequence>
<reference key="1">
    <citation type="journal article" date="1991" name="Gene">
        <title>Sequence and conservation of genes at the distal end of the transfer region on plasmids F and R6-5.</title>
        <authorList>
            <person name="Cram D.S."/>
            <person name="Loh S.M."/>
            <person name="Cheah K.C."/>
            <person name="Skurray R.A."/>
        </authorList>
    </citation>
    <scope>NUCLEOTIDE SEQUENCE [GENOMIC DNA]</scope>
</reference>
<reference key="2">
    <citation type="journal article" date="2000" name="Nat. Struct. Biol.">
        <title>Crystal structure of the bacterial conjugation repressor finO.</title>
        <authorList>
            <person name="Ghetu A.F."/>
            <person name="Gubbins M.J."/>
            <person name="Frost L.S."/>
            <person name="Glover J.N."/>
        </authorList>
    </citation>
    <scope>X-RAY CRYSTALLOGRAPHY (2.0 ANGSTROMS)</scope>
</reference>
<dbReference type="EMBL" id="M38048">
    <property type="protein sequence ID" value="AAA98316.1"/>
    <property type="molecule type" value="Genomic_DNA"/>
</dbReference>
<dbReference type="RefSeq" id="WP_000139323.1">
    <property type="nucleotide sequence ID" value="NZ_WSWZ01000049.1"/>
</dbReference>
<dbReference type="RefSeq" id="YP_002456228.1">
    <property type="nucleotide sequence ID" value="NC_011812.1"/>
</dbReference>
<dbReference type="RefSeq" id="YP_006952274.1">
    <property type="nucleotide sequence ID" value="NC_019057.1"/>
</dbReference>
<dbReference type="RefSeq" id="YP_006953358.1">
    <property type="nucleotide sequence ID" value="NC_019071.1"/>
</dbReference>
<dbReference type="RefSeq" id="YP_006953456.1">
    <property type="nucleotide sequence ID" value="NC_019072.1"/>
</dbReference>
<dbReference type="RefSeq" id="YP_006953983.1">
    <property type="nucleotide sequence ID" value="NC_019090.1"/>
</dbReference>
<dbReference type="RefSeq" id="YP_006954301.1">
    <property type="nucleotide sequence ID" value="NC_019095.1"/>
</dbReference>
<dbReference type="RefSeq" id="YP_007447581.1">
    <property type="nucleotide sequence ID" value="NC_020278.2"/>
</dbReference>
<dbReference type="PDB" id="1DVO">
    <property type="method" value="X-ray"/>
    <property type="resolution" value="2.00 A"/>
    <property type="chains" value="A=33-184"/>
</dbReference>
<dbReference type="PDBsum" id="1DVO"/>
<dbReference type="SMR" id="P29367"/>
<dbReference type="EvolutionaryTrace" id="P29367"/>
<dbReference type="GO" id="GO:0003723">
    <property type="term" value="F:RNA binding"/>
    <property type="evidence" value="ECO:0007669"/>
    <property type="project" value="UniProtKB-KW"/>
</dbReference>
<dbReference type="CDD" id="cd00236">
    <property type="entry name" value="FinO_conjug_rep"/>
    <property type="match status" value="1"/>
</dbReference>
<dbReference type="Gene3D" id="1.10.1710.10">
    <property type="entry name" value="ProQ/FinO domain"/>
    <property type="match status" value="1"/>
</dbReference>
<dbReference type="InterPro" id="IPR021065">
    <property type="entry name" value="Fertility_inhibition_FinO_N"/>
</dbReference>
<dbReference type="InterPro" id="IPR016103">
    <property type="entry name" value="ProQ/FinO"/>
</dbReference>
<dbReference type="InterPro" id="IPR036442">
    <property type="entry name" value="ProQ/FinO_sf"/>
</dbReference>
<dbReference type="NCBIfam" id="NF010317">
    <property type="entry name" value="PRK13754.1"/>
    <property type="match status" value="1"/>
</dbReference>
<dbReference type="Pfam" id="PF12602">
    <property type="entry name" value="FinO_N"/>
    <property type="match status" value="1"/>
</dbReference>
<dbReference type="Pfam" id="PF04352">
    <property type="entry name" value="ProQ"/>
    <property type="match status" value="1"/>
</dbReference>
<dbReference type="SMART" id="SM00945">
    <property type="entry name" value="ProQ"/>
    <property type="match status" value="1"/>
</dbReference>
<dbReference type="SUPFAM" id="SSF48657">
    <property type="entry name" value="FinO-like"/>
    <property type="match status" value="1"/>
</dbReference>
<protein>
    <recommendedName>
        <fullName>Fertility inhibition protein</fullName>
    </recommendedName>
    <alternativeName>
        <fullName>Conjugal transfer repressor</fullName>
    </alternativeName>
</protein>
<gene>
    <name type="primary">finO</name>
</gene>
<proteinExistence type="evidence at protein level"/>
<comment type="function">
    <text evidence="1">One of the components on the FinOP fertility inhibition complex, which inhibits the expression of traJ gene, which in turn regulates the expression of some 20 transfer genes. The transfer genes are responsible for the process, called conjugal transfer, in which DNA is transmitted from one bacterial host to another. RNA-binding that interacts with the traJ mRNA and its antisense RNA, finP, stabilizing finP against endonucleolytic degradation and facilitating sense-antisense RNA recognition (By similarity).</text>
</comment>
<comment type="similarity">
    <text evidence="3">Belongs to the FinO family.</text>
</comment>
<geneLocation type="plasmid">
    <name>R6-5</name>
</geneLocation>
<keyword id="KW-0002">3D-structure</keyword>
<keyword id="KW-0184">Conjugation</keyword>
<keyword id="KW-0614">Plasmid</keyword>
<keyword id="KW-0678">Repressor</keyword>
<keyword id="KW-0694">RNA-binding</keyword>
<keyword id="KW-0804">Transcription</keyword>
<keyword id="KW-0805">Transcription regulation</keyword>